<feature type="chain" id="PRO_0000273666" description="Exodeoxyribonuclease 7 large subunit">
    <location>
        <begin position="1"/>
        <end position="446"/>
    </location>
</feature>
<sequence>MSKEYLTVSALTKYLHTKFTRDPYLRRVYLTGEISNFRRRATHQYFSLKDDNAVISVMMFQSAFSKIKFEPEKGMKVLVSGRVDLYEKSGRYQIIIDTMQPDGVGALYQAYEQLVKKLRIEGLFNEELKKPLVKYPKRIAVITSPSGAVIRDIITTTHRRYPIAQLVLFPAVVQGDDAADSLVGRLKQVNEEGNFDTIIIGRGGGSIEDLWPFNEEKVARAISDSKIPVISSVGHETDTTIADLVADVRAATPTAAAELATPVLSEEIVKIKQYRLRIIQVLKNKISNYQQILDKVCSSYILQQPDRLYTGYAQNLDSLINRKNQAFKNLVYQNEKQLQLLESNLQHNNPSIRIKDEKNNLQQLLEKMHLGMLGVFNDKSYKLEKLMSSLDMLSPLKVMNRGYSYILKDGKTVKNVKSLQPNDDVTLYFENGSAEARITKIREEKE</sequence>
<gene>
    <name evidence="1" type="primary">xseA</name>
    <name type="ordered locus">LSL_0534</name>
</gene>
<protein>
    <recommendedName>
        <fullName evidence="1">Exodeoxyribonuclease 7 large subunit</fullName>
        <ecNumber evidence="1">3.1.11.6</ecNumber>
    </recommendedName>
    <alternativeName>
        <fullName evidence="1">Exodeoxyribonuclease VII large subunit</fullName>
        <shortName evidence="1">Exonuclease VII large subunit</shortName>
    </alternativeName>
</protein>
<comment type="function">
    <text evidence="1">Bidirectionally degrades single-stranded DNA into large acid-insoluble oligonucleotides, which are then degraded further into small acid-soluble oligonucleotides.</text>
</comment>
<comment type="catalytic activity">
    <reaction evidence="1">
        <text>Exonucleolytic cleavage in either 5'- to 3'- or 3'- to 5'-direction to yield nucleoside 5'-phosphates.</text>
        <dbReference type="EC" id="3.1.11.6"/>
    </reaction>
</comment>
<comment type="subunit">
    <text evidence="1">Heterooligomer composed of large and small subunits.</text>
</comment>
<comment type="subcellular location">
    <subcellularLocation>
        <location evidence="1">Cytoplasm</location>
    </subcellularLocation>
</comment>
<comment type="similarity">
    <text evidence="1">Belongs to the XseA family.</text>
</comment>
<accession>Q1WUJ2</accession>
<keyword id="KW-0963">Cytoplasm</keyword>
<keyword id="KW-0269">Exonuclease</keyword>
<keyword id="KW-0378">Hydrolase</keyword>
<keyword id="KW-0540">Nuclease</keyword>
<keyword id="KW-1185">Reference proteome</keyword>
<evidence type="ECO:0000255" key="1">
    <source>
        <dbReference type="HAMAP-Rule" id="MF_00378"/>
    </source>
</evidence>
<name>EX7L_LIGS1</name>
<organism>
    <name type="scientific">Ligilactobacillus salivarius (strain UCC118)</name>
    <name type="common">Lactobacillus salivarius</name>
    <dbReference type="NCBI Taxonomy" id="362948"/>
    <lineage>
        <taxon>Bacteria</taxon>
        <taxon>Bacillati</taxon>
        <taxon>Bacillota</taxon>
        <taxon>Bacilli</taxon>
        <taxon>Lactobacillales</taxon>
        <taxon>Lactobacillaceae</taxon>
        <taxon>Ligilactobacillus</taxon>
    </lineage>
</organism>
<proteinExistence type="inferred from homology"/>
<dbReference type="EC" id="3.1.11.6" evidence="1"/>
<dbReference type="EMBL" id="CP000233">
    <property type="protein sequence ID" value="ABD99343.1"/>
    <property type="molecule type" value="Genomic_DNA"/>
</dbReference>
<dbReference type="RefSeq" id="WP_011475809.1">
    <property type="nucleotide sequence ID" value="NC_007929.1"/>
</dbReference>
<dbReference type="RefSeq" id="YP_535426.1">
    <property type="nucleotide sequence ID" value="NC_007929.1"/>
</dbReference>
<dbReference type="SMR" id="Q1WUJ2"/>
<dbReference type="STRING" id="362948.LSL_0534"/>
<dbReference type="KEGG" id="lsl:LSL_0534"/>
<dbReference type="PATRIC" id="fig|362948.14.peg.612"/>
<dbReference type="HOGENOM" id="CLU_023625_3_1_9"/>
<dbReference type="OrthoDB" id="9802795at2"/>
<dbReference type="Proteomes" id="UP000006559">
    <property type="component" value="Chromosome"/>
</dbReference>
<dbReference type="GO" id="GO:0005737">
    <property type="term" value="C:cytoplasm"/>
    <property type="evidence" value="ECO:0007669"/>
    <property type="project" value="UniProtKB-SubCell"/>
</dbReference>
<dbReference type="GO" id="GO:0009318">
    <property type="term" value="C:exodeoxyribonuclease VII complex"/>
    <property type="evidence" value="ECO:0007669"/>
    <property type="project" value="InterPro"/>
</dbReference>
<dbReference type="GO" id="GO:0008855">
    <property type="term" value="F:exodeoxyribonuclease VII activity"/>
    <property type="evidence" value="ECO:0007669"/>
    <property type="project" value="UniProtKB-UniRule"/>
</dbReference>
<dbReference type="GO" id="GO:0003676">
    <property type="term" value="F:nucleic acid binding"/>
    <property type="evidence" value="ECO:0007669"/>
    <property type="project" value="InterPro"/>
</dbReference>
<dbReference type="GO" id="GO:0006308">
    <property type="term" value="P:DNA catabolic process"/>
    <property type="evidence" value="ECO:0007669"/>
    <property type="project" value="UniProtKB-UniRule"/>
</dbReference>
<dbReference type="CDD" id="cd04489">
    <property type="entry name" value="ExoVII_LU_OBF"/>
    <property type="match status" value="1"/>
</dbReference>
<dbReference type="HAMAP" id="MF_00378">
    <property type="entry name" value="Exonuc_7_L"/>
    <property type="match status" value="1"/>
</dbReference>
<dbReference type="InterPro" id="IPR003753">
    <property type="entry name" value="Exonuc_VII_L"/>
</dbReference>
<dbReference type="InterPro" id="IPR020579">
    <property type="entry name" value="Exonuc_VII_lsu_C"/>
</dbReference>
<dbReference type="InterPro" id="IPR025824">
    <property type="entry name" value="OB-fold_nuc-bd_dom"/>
</dbReference>
<dbReference type="NCBIfam" id="TIGR00237">
    <property type="entry name" value="xseA"/>
    <property type="match status" value="1"/>
</dbReference>
<dbReference type="PANTHER" id="PTHR30008">
    <property type="entry name" value="EXODEOXYRIBONUCLEASE 7 LARGE SUBUNIT"/>
    <property type="match status" value="1"/>
</dbReference>
<dbReference type="PANTHER" id="PTHR30008:SF0">
    <property type="entry name" value="EXODEOXYRIBONUCLEASE 7 LARGE SUBUNIT"/>
    <property type="match status" value="1"/>
</dbReference>
<dbReference type="Pfam" id="PF02601">
    <property type="entry name" value="Exonuc_VII_L"/>
    <property type="match status" value="1"/>
</dbReference>
<dbReference type="Pfam" id="PF13742">
    <property type="entry name" value="tRNA_anti_2"/>
    <property type="match status" value="1"/>
</dbReference>
<reference key="1">
    <citation type="journal article" date="2006" name="Proc. Natl. Acad. Sci. U.S.A.">
        <title>Multireplicon genome architecture of Lactobacillus salivarius.</title>
        <authorList>
            <person name="Claesson M.J."/>
            <person name="Li Y."/>
            <person name="Leahy S."/>
            <person name="Canchaya C."/>
            <person name="van Pijkeren J.P."/>
            <person name="Cerdeno-Tarraga A.M."/>
            <person name="Parkhill J."/>
            <person name="Flynn S."/>
            <person name="O'Sullivan G.C."/>
            <person name="Collins J.K."/>
            <person name="Higgins D."/>
            <person name="Shanahan F."/>
            <person name="Fitzgerald G.F."/>
            <person name="van Sinderen D."/>
            <person name="O'Toole P.W."/>
        </authorList>
    </citation>
    <scope>NUCLEOTIDE SEQUENCE [LARGE SCALE GENOMIC DNA]</scope>
    <source>
        <strain>UCC118</strain>
    </source>
</reference>